<name>DDL_BURCM</name>
<feature type="chain" id="PRO_0000341066" description="D-alanine--D-alanine ligase">
    <location>
        <begin position="1"/>
        <end position="313"/>
    </location>
</feature>
<feature type="domain" description="ATP-grasp" evidence="2">
    <location>
        <begin position="108"/>
        <end position="308"/>
    </location>
</feature>
<feature type="binding site" evidence="2">
    <location>
        <begin position="138"/>
        <end position="193"/>
    </location>
    <ligand>
        <name>ATP</name>
        <dbReference type="ChEBI" id="CHEBI:30616"/>
    </ligand>
</feature>
<feature type="binding site" evidence="2">
    <location>
        <position position="262"/>
    </location>
    <ligand>
        <name>Mg(2+)</name>
        <dbReference type="ChEBI" id="CHEBI:18420"/>
        <label>1</label>
    </ligand>
</feature>
<feature type="binding site" evidence="2">
    <location>
        <position position="275"/>
    </location>
    <ligand>
        <name>Mg(2+)</name>
        <dbReference type="ChEBI" id="CHEBI:18420"/>
        <label>1</label>
    </ligand>
</feature>
<feature type="binding site" evidence="2">
    <location>
        <position position="275"/>
    </location>
    <ligand>
        <name>Mg(2+)</name>
        <dbReference type="ChEBI" id="CHEBI:18420"/>
        <label>2</label>
    </ligand>
</feature>
<feature type="binding site" evidence="2">
    <location>
        <position position="277"/>
    </location>
    <ligand>
        <name>Mg(2+)</name>
        <dbReference type="ChEBI" id="CHEBI:18420"/>
        <label>2</label>
    </ligand>
</feature>
<evidence type="ECO:0000250" key="1"/>
<evidence type="ECO:0000255" key="2">
    <source>
        <dbReference type="HAMAP-Rule" id="MF_00047"/>
    </source>
</evidence>
<protein>
    <recommendedName>
        <fullName evidence="2">D-alanine--D-alanine ligase</fullName>
        <ecNumber evidence="2">6.3.2.4</ecNumber>
    </recommendedName>
    <alternativeName>
        <fullName evidence="2">D-Ala-D-Ala ligase</fullName>
    </alternativeName>
    <alternativeName>
        <fullName evidence="2">D-alanylalanine synthetase</fullName>
    </alternativeName>
</protein>
<dbReference type="EC" id="6.3.2.4" evidence="2"/>
<dbReference type="EMBL" id="CP000440">
    <property type="protein sequence ID" value="ABI86024.1"/>
    <property type="molecule type" value="Genomic_DNA"/>
</dbReference>
<dbReference type="RefSeq" id="WP_011655894.1">
    <property type="nucleotide sequence ID" value="NC_008390.1"/>
</dbReference>
<dbReference type="SMR" id="Q0BIJ9"/>
<dbReference type="GeneID" id="93084118"/>
<dbReference type="KEGG" id="bam:Bamb_0465"/>
<dbReference type="PATRIC" id="fig|339670.21.peg.1141"/>
<dbReference type="eggNOG" id="COG1181">
    <property type="taxonomic scope" value="Bacteria"/>
</dbReference>
<dbReference type="UniPathway" id="UPA00219"/>
<dbReference type="Proteomes" id="UP000000662">
    <property type="component" value="Chromosome 1"/>
</dbReference>
<dbReference type="GO" id="GO:0005829">
    <property type="term" value="C:cytosol"/>
    <property type="evidence" value="ECO:0007669"/>
    <property type="project" value="TreeGrafter"/>
</dbReference>
<dbReference type="GO" id="GO:0005524">
    <property type="term" value="F:ATP binding"/>
    <property type="evidence" value="ECO:0007669"/>
    <property type="project" value="UniProtKB-KW"/>
</dbReference>
<dbReference type="GO" id="GO:0008716">
    <property type="term" value="F:D-alanine-D-alanine ligase activity"/>
    <property type="evidence" value="ECO:0007669"/>
    <property type="project" value="UniProtKB-UniRule"/>
</dbReference>
<dbReference type="GO" id="GO:0046872">
    <property type="term" value="F:metal ion binding"/>
    <property type="evidence" value="ECO:0007669"/>
    <property type="project" value="UniProtKB-KW"/>
</dbReference>
<dbReference type="GO" id="GO:0071555">
    <property type="term" value="P:cell wall organization"/>
    <property type="evidence" value="ECO:0007669"/>
    <property type="project" value="UniProtKB-KW"/>
</dbReference>
<dbReference type="GO" id="GO:0009252">
    <property type="term" value="P:peptidoglycan biosynthetic process"/>
    <property type="evidence" value="ECO:0007669"/>
    <property type="project" value="UniProtKB-UniRule"/>
</dbReference>
<dbReference type="GO" id="GO:0008360">
    <property type="term" value="P:regulation of cell shape"/>
    <property type="evidence" value="ECO:0007669"/>
    <property type="project" value="UniProtKB-KW"/>
</dbReference>
<dbReference type="FunFam" id="3.30.1490.20:FF:000007">
    <property type="entry name" value="D-alanine--D-alanine ligase"/>
    <property type="match status" value="1"/>
</dbReference>
<dbReference type="FunFam" id="3.30.470.20:FF:000008">
    <property type="entry name" value="D-alanine--D-alanine ligase"/>
    <property type="match status" value="1"/>
</dbReference>
<dbReference type="FunFam" id="3.40.50.20:FF:000013">
    <property type="entry name" value="D-alanine--D-alanine ligase"/>
    <property type="match status" value="1"/>
</dbReference>
<dbReference type="Gene3D" id="3.40.50.20">
    <property type="match status" value="1"/>
</dbReference>
<dbReference type="Gene3D" id="3.30.1490.20">
    <property type="entry name" value="ATP-grasp fold, A domain"/>
    <property type="match status" value="1"/>
</dbReference>
<dbReference type="Gene3D" id="3.30.470.20">
    <property type="entry name" value="ATP-grasp fold, B domain"/>
    <property type="match status" value="1"/>
</dbReference>
<dbReference type="HAMAP" id="MF_00047">
    <property type="entry name" value="Dala_Dala_lig"/>
    <property type="match status" value="1"/>
</dbReference>
<dbReference type="InterPro" id="IPR011761">
    <property type="entry name" value="ATP-grasp"/>
</dbReference>
<dbReference type="InterPro" id="IPR013815">
    <property type="entry name" value="ATP_grasp_subdomain_1"/>
</dbReference>
<dbReference type="InterPro" id="IPR000291">
    <property type="entry name" value="D-Ala_lig_Van_CS"/>
</dbReference>
<dbReference type="InterPro" id="IPR005905">
    <property type="entry name" value="D_ala_D_ala"/>
</dbReference>
<dbReference type="InterPro" id="IPR011095">
    <property type="entry name" value="Dala_Dala_lig_C"/>
</dbReference>
<dbReference type="InterPro" id="IPR011127">
    <property type="entry name" value="Dala_Dala_lig_N"/>
</dbReference>
<dbReference type="InterPro" id="IPR016185">
    <property type="entry name" value="PreATP-grasp_dom_sf"/>
</dbReference>
<dbReference type="NCBIfam" id="TIGR01205">
    <property type="entry name" value="D_ala_D_alaTIGR"/>
    <property type="match status" value="1"/>
</dbReference>
<dbReference type="NCBIfam" id="NF002378">
    <property type="entry name" value="PRK01372.1"/>
    <property type="match status" value="1"/>
</dbReference>
<dbReference type="PANTHER" id="PTHR23132">
    <property type="entry name" value="D-ALANINE--D-ALANINE LIGASE"/>
    <property type="match status" value="1"/>
</dbReference>
<dbReference type="PANTHER" id="PTHR23132:SF23">
    <property type="entry name" value="D-ALANINE--D-ALANINE LIGASE B"/>
    <property type="match status" value="1"/>
</dbReference>
<dbReference type="Pfam" id="PF07478">
    <property type="entry name" value="Dala_Dala_lig_C"/>
    <property type="match status" value="1"/>
</dbReference>
<dbReference type="Pfam" id="PF01820">
    <property type="entry name" value="Dala_Dala_lig_N"/>
    <property type="match status" value="1"/>
</dbReference>
<dbReference type="PIRSF" id="PIRSF039102">
    <property type="entry name" value="Ddl/VanB"/>
    <property type="match status" value="1"/>
</dbReference>
<dbReference type="SUPFAM" id="SSF56059">
    <property type="entry name" value="Glutathione synthetase ATP-binding domain-like"/>
    <property type="match status" value="1"/>
</dbReference>
<dbReference type="SUPFAM" id="SSF52440">
    <property type="entry name" value="PreATP-grasp domain"/>
    <property type="match status" value="1"/>
</dbReference>
<dbReference type="PROSITE" id="PS50975">
    <property type="entry name" value="ATP_GRASP"/>
    <property type="match status" value="1"/>
</dbReference>
<dbReference type="PROSITE" id="PS00843">
    <property type="entry name" value="DALA_DALA_LIGASE_1"/>
    <property type="match status" value="1"/>
</dbReference>
<dbReference type="PROSITE" id="PS00844">
    <property type="entry name" value="DALA_DALA_LIGASE_2"/>
    <property type="match status" value="1"/>
</dbReference>
<proteinExistence type="inferred from homology"/>
<keyword id="KW-0067">ATP-binding</keyword>
<keyword id="KW-0133">Cell shape</keyword>
<keyword id="KW-0961">Cell wall biogenesis/degradation</keyword>
<keyword id="KW-0963">Cytoplasm</keyword>
<keyword id="KW-0436">Ligase</keyword>
<keyword id="KW-0460">Magnesium</keyword>
<keyword id="KW-0464">Manganese</keyword>
<keyword id="KW-0479">Metal-binding</keyword>
<keyword id="KW-0547">Nucleotide-binding</keyword>
<keyword id="KW-0573">Peptidoglycan synthesis</keyword>
<sequence length="313" mass="33407">MSGIDPKRFGKVAVLFGGESAEREVSLTSGRLVLQGLRDAGIDAHPFDPAERPLSALKDEGFVRAFNALHGGYGENGQIQGALDFYGIRYTGSGVLGSALGLDKFRTKLVWQQTGVPTPPFETVMRGDDYAARATDIVAKLGLPLFVKPASEGSSVAVLKVKTADALPAALSEAATHDKIVIVEKSIEGGGEYTACIAGDLDLPLIKIVPAGEFYDYHAKYVANDTQYLIPCGLPAEQETELKRIARRAFDVLGCTDWGRADFMLDAAGNAYFLEVNTAPGMTDHSLPPKAARSIGISYSELVVKVLALTLND</sequence>
<organism>
    <name type="scientific">Burkholderia ambifaria (strain ATCC BAA-244 / DSM 16087 / CCUG 44356 / LMG 19182 / AMMD)</name>
    <name type="common">Burkholderia cepacia (strain AMMD)</name>
    <dbReference type="NCBI Taxonomy" id="339670"/>
    <lineage>
        <taxon>Bacteria</taxon>
        <taxon>Pseudomonadati</taxon>
        <taxon>Pseudomonadota</taxon>
        <taxon>Betaproteobacteria</taxon>
        <taxon>Burkholderiales</taxon>
        <taxon>Burkholderiaceae</taxon>
        <taxon>Burkholderia</taxon>
        <taxon>Burkholderia cepacia complex</taxon>
    </lineage>
</organism>
<comment type="function">
    <text evidence="2">Cell wall formation.</text>
</comment>
<comment type="catalytic activity">
    <reaction evidence="2">
        <text>2 D-alanine + ATP = D-alanyl-D-alanine + ADP + phosphate + H(+)</text>
        <dbReference type="Rhea" id="RHEA:11224"/>
        <dbReference type="ChEBI" id="CHEBI:15378"/>
        <dbReference type="ChEBI" id="CHEBI:30616"/>
        <dbReference type="ChEBI" id="CHEBI:43474"/>
        <dbReference type="ChEBI" id="CHEBI:57416"/>
        <dbReference type="ChEBI" id="CHEBI:57822"/>
        <dbReference type="ChEBI" id="CHEBI:456216"/>
        <dbReference type="EC" id="6.3.2.4"/>
    </reaction>
</comment>
<comment type="cofactor">
    <cofactor evidence="1">
        <name>Mg(2+)</name>
        <dbReference type="ChEBI" id="CHEBI:18420"/>
    </cofactor>
    <cofactor evidence="1">
        <name>Mn(2+)</name>
        <dbReference type="ChEBI" id="CHEBI:29035"/>
    </cofactor>
    <text evidence="1">Binds 2 magnesium or manganese ions per subunit.</text>
</comment>
<comment type="pathway">
    <text evidence="2">Cell wall biogenesis; peptidoglycan biosynthesis.</text>
</comment>
<comment type="subcellular location">
    <subcellularLocation>
        <location evidence="2">Cytoplasm</location>
    </subcellularLocation>
</comment>
<comment type="similarity">
    <text evidence="2">Belongs to the D-alanine--D-alanine ligase family.</text>
</comment>
<gene>
    <name evidence="2" type="primary">ddl</name>
    <name type="ordered locus">Bamb_0465</name>
</gene>
<accession>Q0BIJ9</accession>
<reference key="1">
    <citation type="submission" date="2006-08" db="EMBL/GenBank/DDBJ databases">
        <title>Complete sequence of chromosome 1 of Burkholderia cepacia AMMD.</title>
        <authorList>
            <person name="Copeland A."/>
            <person name="Lucas S."/>
            <person name="Lapidus A."/>
            <person name="Barry K."/>
            <person name="Detter J.C."/>
            <person name="Glavina del Rio T."/>
            <person name="Hammon N."/>
            <person name="Israni S."/>
            <person name="Pitluck S."/>
            <person name="Bruce D."/>
            <person name="Chain P."/>
            <person name="Malfatti S."/>
            <person name="Shin M."/>
            <person name="Vergez L."/>
            <person name="Schmutz J."/>
            <person name="Larimer F."/>
            <person name="Land M."/>
            <person name="Hauser L."/>
            <person name="Kyrpides N."/>
            <person name="Kim E."/>
            <person name="Parke J."/>
            <person name="Coenye T."/>
            <person name="Konstantinidis K."/>
            <person name="Ramette A."/>
            <person name="Tiedje J."/>
            <person name="Richardson P."/>
        </authorList>
    </citation>
    <scope>NUCLEOTIDE SEQUENCE [LARGE SCALE GENOMIC DNA]</scope>
    <source>
        <strain>ATCC BAA-244 / DSM 16087 / CCUG 44356 / LMG 19182 / AMMD</strain>
    </source>
</reference>